<name>ATG11_NEUCR</name>
<organism>
    <name type="scientific">Neurospora crassa (strain ATCC 24698 / 74-OR23-1A / CBS 708.71 / DSM 1257 / FGSC 987)</name>
    <dbReference type="NCBI Taxonomy" id="367110"/>
    <lineage>
        <taxon>Eukaryota</taxon>
        <taxon>Fungi</taxon>
        <taxon>Dikarya</taxon>
        <taxon>Ascomycota</taxon>
        <taxon>Pezizomycotina</taxon>
        <taxon>Sordariomycetes</taxon>
        <taxon>Sordariomycetidae</taxon>
        <taxon>Sordariales</taxon>
        <taxon>Sordariaceae</taxon>
        <taxon>Neurospora</taxon>
    </lineage>
</organism>
<dbReference type="EMBL" id="CM002236">
    <property type="protein sequence ID" value="EAA28680.2"/>
    <property type="molecule type" value="Genomic_DNA"/>
</dbReference>
<dbReference type="RefSeq" id="XP_957916.2">
    <property type="nucleotide sequence ID" value="XM_952823.3"/>
</dbReference>
<dbReference type="SMR" id="Q7S055"/>
<dbReference type="FunCoup" id="Q7S055">
    <property type="interactions" value="132"/>
</dbReference>
<dbReference type="STRING" id="367110.Q7S055"/>
<dbReference type="PaxDb" id="5141-EFNCRP00000009736"/>
<dbReference type="EnsemblFungi" id="EAA28680">
    <property type="protein sequence ID" value="EAA28680"/>
    <property type="gene ID" value="NCU09998"/>
</dbReference>
<dbReference type="GeneID" id="3874063"/>
<dbReference type="KEGG" id="ncr:NCU09998"/>
<dbReference type="VEuPathDB" id="FungiDB:NCU09998"/>
<dbReference type="HOGENOM" id="CLU_002803_1_0_1"/>
<dbReference type="InParanoid" id="Q7S055"/>
<dbReference type="OrthoDB" id="447953at2759"/>
<dbReference type="Proteomes" id="UP000001805">
    <property type="component" value="Chromosome 1, Linkage Group I"/>
</dbReference>
<dbReference type="GO" id="GO:1990316">
    <property type="term" value="C:Atg1/ULK1 kinase complex"/>
    <property type="evidence" value="ECO:0000318"/>
    <property type="project" value="GO_Central"/>
</dbReference>
<dbReference type="GO" id="GO:0034045">
    <property type="term" value="C:phagophore assembly site membrane"/>
    <property type="evidence" value="ECO:0000318"/>
    <property type="project" value="GO_Central"/>
</dbReference>
<dbReference type="GO" id="GO:0005774">
    <property type="term" value="C:vacuolar membrane"/>
    <property type="evidence" value="ECO:0007669"/>
    <property type="project" value="UniProtKB-SubCell"/>
</dbReference>
<dbReference type="GO" id="GO:0060090">
    <property type="term" value="F:molecular adaptor activity"/>
    <property type="evidence" value="ECO:0000318"/>
    <property type="project" value="GO_Central"/>
</dbReference>
<dbReference type="GO" id="GO:0019901">
    <property type="term" value="F:protein kinase binding"/>
    <property type="evidence" value="ECO:0000318"/>
    <property type="project" value="GO_Central"/>
</dbReference>
<dbReference type="GO" id="GO:0000045">
    <property type="term" value="P:autophagosome assembly"/>
    <property type="evidence" value="ECO:0000318"/>
    <property type="project" value="GO_Central"/>
</dbReference>
<dbReference type="GO" id="GO:0000422">
    <property type="term" value="P:autophagy of mitochondrion"/>
    <property type="evidence" value="ECO:0000318"/>
    <property type="project" value="GO_Central"/>
</dbReference>
<dbReference type="GO" id="GO:0000425">
    <property type="term" value="P:pexophagy"/>
    <property type="evidence" value="ECO:0000318"/>
    <property type="project" value="GO_Central"/>
</dbReference>
<dbReference type="GO" id="GO:0034727">
    <property type="term" value="P:piecemeal microautophagy of the nucleus"/>
    <property type="evidence" value="ECO:0000318"/>
    <property type="project" value="GO_Central"/>
</dbReference>
<dbReference type="GO" id="GO:0015031">
    <property type="term" value="P:protein transport"/>
    <property type="evidence" value="ECO:0007669"/>
    <property type="project" value="UniProtKB-KW"/>
</dbReference>
<dbReference type="GO" id="GO:0061709">
    <property type="term" value="P:reticulophagy"/>
    <property type="evidence" value="ECO:0000318"/>
    <property type="project" value="GO_Central"/>
</dbReference>
<dbReference type="GO" id="GO:0034517">
    <property type="term" value="P:ribophagy"/>
    <property type="evidence" value="ECO:0000318"/>
    <property type="project" value="GO_Central"/>
</dbReference>
<dbReference type="Gene3D" id="1.10.287.1490">
    <property type="match status" value="1"/>
</dbReference>
<dbReference type="InterPro" id="IPR040040">
    <property type="entry name" value="ATG11"/>
</dbReference>
<dbReference type="InterPro" id="IPR019460">
    <property type="entry name" value="Atg11_C"/>
</dbReference>
<dbReference type="InterPro" id="IPR045326">
    <property type="entry name" value="ATG17-like_dom"/>
</dbReference>
<dbReference type="PANTHER" id="PTHR13222">
    <property type="entry name" value="RB1-INDUCIBLE COILED-COIL"/>
    <property type="match status" value="1"/>
</dbReference>
<dbReference type="PANTHER" id="PTHR13222:SF1">
    <property type="entry name" value="RB1-INDUCIBLE COILED-COIL PROTEIN 1"/>
    <property type="match status" value="1"/>
</dbReference>
<dbReference type="Pfam" id="PF10377">
    <property type="entry name" value="ATG11"/>
    <property type="match status" value="1"/>
</dbReference>
<dbReference type="Pfam" id="PF04108">
    <property type="entry name" value="ATG17_like"/>
    <property type="match status" value="1"/>
</dbReference>
<dbReference type="SUPFAM" id="SSF57997">
    <property type="entry name" value="Tropomyosin"/>
    <property type="match status" value="1"/>
</dbReference>
<gene>
    <name type="primary">apg-8</name>
    <name type="synonym">atg11</name>
    <name type="ORF">NCU09998</name>
</gene>
<evidence type="ECO:0000250" key="1"/>
<evidence type="ECO:0000255" key="2"/>
<evidence type="ECO:0000256" key="3">
    <source>
        <dbReference type="SAM" id="MobiDB-lite"/>
    </source>
</evidence>
<evidence type="ECO:0000305" key="4"/>
<feature type="chain" id="PRO_0000124550" description="Autophagy-related protein 11">
    <location>
        <begin position="1"/>
        <end position="1429"/>
    </location>
</feature>
<feature type="region of interest" description="Disordered" evidence="3">
    <location>
        <begin position="71"/>
        <end position="99"/>
    </location>
</feature>
<feature type="region of interest" description="Disordered" evidence="3">
    <location>
        <begin position="1024"/>
        <end position="1061"/>
    </location>
</feature>
<feature type="region of interest" description="Disordered" evidence="3">
    <location>
        <begin position="1209"/>
        <end position="1241"/>
    </location>
</feature>
<feature type="region of interest" description="Disordered" evidence="3">
    <location>
        <begin position="1336"/>
        <end position="1429"/>
    </location>
</feature>
<feature type="coiled-coil region" evidence="2">
    <location>
        <begin position="143"/>
        <end position="173"/>
    </location>
</feature>
<feature type="coiled-coil region" evidence="2">
    <location>
        <begin position="553"/>
        <end position="590"/>
    </location>
</feature>
<feature type="coiled-coil region" evidence="2">
    <location>
        <begin position="632"/>
        <end position="815"/>
    </location>
</feature>
<feature type="coiled-coil region" evidence="2">
    <location>
        <begin position="851"/>
        <end position="989"/>
    </location>
</feature>
<feature type="coiled-coil region" evidence="2">
    <location>
        <begin position="1105"/>
        <end position="1143"/>
    </location>
</feature>
<feature type="compositionally biased region" description="Low complexity" evidence="3">
    <location>
        <begin position="80"/>
        <end position="89"/>
    </location>
</feature>
<feature type="compositionally biased region" description="Low complexity" evidence="3">
    <location>
        <begin position="1042"/>
        <end position="1061"/>
    </location>
</feature>
<feature type="compositionally biased region" description="Basic and acidic residues" evidence="3">
    <location>
        <begin position="1209"/>
        <end position="1229"/>
    </location>
</feature>
<feature type="compositionally biased region" description="Acidic residues" evidence="3">
    <location>
        <begin position="1230"/>
        <end position="1239"/>
    </location>
</feature>
<feature type="compositionally biased region" description="Polar residues" evidence="3">
    <location>
        <begin position="1345"/>
        <end position="1372"/>
    </location>
</feature>
<feature type="compositionally biased region" description="Polar residues" evidence="3">
    <location>
        <begin position="1383"/>
        <end position="1393"/>
    </location>
</feature>
<protein>
    <recommendedName>
        <fullName>Autophagy-related protein 11</fullName>
    </recommendedName>
</protein>
<keyword id="KW-0072">Autophagy</keyword>
<keyword id="KW-0175">Coiled coil</keyword>
<keyword id="KW-0472">Membrane</keyword>
<keyword id="KW-0653">Protein transport</keyword>
<keyword id="KW-1185">Reference proteome</keyword>
<keyword id="KW-0813">Transport</keyword>
<keyword id="KW-0926">Vacuole</keyword>
<accession>Q7S055</accession>
<reference key="1">
    <citation type="journal article" date="2003" name="Nature">
        <title>The genome sequence of the filamentous fungus Neurospora crassa.</title>
        <authorList>
            <person name="Galagan J.E."/>
            <person name="Calvo S.E."/>
            <person name="Borkovich K.A."/>
            <person name="Selker E.U."/>
            <person name="Read N.D."/>
            <person name="Jaffe D.B."/>
            <person name="FitzHugh W."/>
            <person name="Ma L.-J."/>
            <person name="Smirnov S."/>
            <person name="Purcell S."/>
            <person name="Rehman B."/>
            <person name="Elkins T."/>
            <person name="Engels R."/>
            <person name="Wang S."/>
            <person name="Nielsen C.B."/>
            <person name="Butler J."/>
            <person name="Endrizzi M."/>
            <person name="Qui D."/>
            <person name="Ianakiev P."/>
            <person name="Bell-Pedersen D."/>
            <person name="Nelson M.A."/>
            <person name="Werner-Washburne M."/>
            <person name="Selitrennikoff C.P."/>
            <person name="Kinsey J.A."/>
            <person name="Braun E.L."/>
            <person name="Zelter A."/>
            <person name="Schulte U."/>
            <person name="Kothe G.O."/>
            <person name="Jedd G."/>
            <person name="Mewes H.-W."/>
            <person name="Staben C."/>
            <person name="Marcotte E."/>
            <person name="Greenberg D."/>
            <person name="Roy A."/>
            <person name="Foley K."/>
            <person name="Naylor J."/>
            <person name="Stange-Thomann N."/>
            <person name="Barrett R."/>
            <person name="Gnerre S."/>
            <person name="Kamal M."/>
            <person name="Kamvysselis M."/>
            <person name="Mauceli E.W."/>
            <person name="Bielke C."/>
            <person name="Rudd S."/>
            <person name="Frishman D."/>
            <person name="Krystofova S."/>
            <person name="Rasmussen C."/>
            <person name="Metzenberg R.L."/>
            <person name="Perkins D.D."/>
            <person name="Kroken S."/>
            <person name="Cogoni C."/>
            <person name="Macino G."/>
            <person name="Catcheside D.E.A."/>
            <person name="Li W."/>
            <person name="Pratt R.J."/>
            <person name="Osmani S.A."/>
            <person name="DeSouza C.P.C."/>
            <person name="Glass N.L."/>
            <person name="Orbach M.J."/>
            <person name="Berglund J.A."/>
            <person name="Voelker R."/>
            <person name="Yarden O."/>
            <person name="Plamann M."/>
            <person name="Seiler S."/>
            <person name="Dunlap J.C."/>
            <person name="Radford A."/>
            <person name="Aramayo R."/>
            <person name="Natvig D.O."/>
            <person name="Alex L.A."/>
            <person name="Mannhaupt G."/>
            <person name="Ebbole D.J."/>
            <person name="Freitag M."/>
            <person name="Paulsen I."/>
            <person name="Sachs M.S."/>
            <person name="Lander E.S."/>
            <person name="Nusbaum C."/>
            <person name="Birren B.W."/>
        </authorList>
    </citation>
    <scope>NUCLEOTIDE SEQUENCE [LARGE SCALE GENOMIC DNA]</scope>
    <source>
        <strain>ATCC 24698 / 74-OR23-1A / CBS 708.71 / DSM 1257 / FGSC 987</strain>
    </source>
</reference>
<sequence>MVTQVLIAHTGQRLEIDSRTITSLNGLKESVASQTSIPVECLIALTPQGRSLRWQPTQPETEIYIYDSRLTQRSQPGASSPPLSELPLPRYNAHTPPNSIEDTRSIPAWQKLFETRRAWAIDVVEDCARMDAATRERYAEMDVMLRCLDAAVANLENAVKGLENKYVELKEWSTSAQAEYSALATGFDRYLSLARGIAISSSMARFMTSRDDGGWKGRPQRQSTLEDLVDLELARQAGKLAPSALRKFKDRITNLDKAATHLFQDADTLMHKFETTMSRSALSHDGESLHLLKDIEALANKIDNDYNVTLEYTSSTRDTLLQVSKTAAHHTERLLPSIQKRALEMGDILCYATKARNSLAAESIEFMRSITEITSDSHSVKSQISETGQEDELATFDHLRLIQQIPYLYASFVAEAIRRREWLDKVKQDSTTLANEMAIFHEEEAKRRRRWHKSIGAVFGPAPTADSKVPNLEINLRGDDGEWPLMTRKDLDDFFNALRNQKADPELVVEIEKLIADMDKSTRQQSRRMKAFKNGSVHETALGRSGLLVRGDDDLLRSLQADKTRLESKLKTAESRVRRLEDLLHRQTQASRPNVGNLFQNPSQQVLDRNDSISSLRNPRAVDDRSRSLDGLETLIHRTQQLETELNTERERCVVLEREINALTTLHNDLKGQMDEANSTKKDLLQNMEALKREFTEERKSLEEEVKQLKARLEYTEDEIEHFGESRENEKASYDEKVHFLELEVERLTRERRDDSLKADDQVVLLQNEARLQRERIAAQDIELRAAQDEIRVLSKRLEAVTEDKQKYRQALEDIWECLAPADDVPTELPDLLEGITGKAADILNTKQGVEGDMSLMKLNVDTLQNNIRTLRSEMDFTKDRLTEEESVSLRLREKFSEERAKVVAMEGELAHGREQLHEFRVKIADGETGSEYMRKRLEDEEQNLASMTEELAAGQTQVQKMEEEVTRFKAKLHQTQMQLSELSIRLESRTECAKDLTQLLWSQNDRLTRLLERLGFSISREEDGTMHIQRTPRSERSLATTANPNDSDPSSSLRRSSTLNARPVTDNADLELLQWMSSATPEAEVEKYKIFMGLIGSLDMDVFADAVYRRVKDVEHMARKLQREARAYREKAHSFQKEAHDKIAFKHFKEGDLALFLPTRNQSTGAWAAFNVGFPHYFLREQDSHRLRNREWLVARIMRIQERVVDLSKSLQHDQAGETRKDGARGETESLDDDENDNPFDLSDGLRWYLIEAVEDKPGAPSTPGLAKSTVAANNVEAMADMRTQGHISKARGLTGRGGTPLGIEGVSKTLSKSLESRRSSTGSRKTLPFVIGASSRGRESALASETNSLRAVPADNNSSAPTNAAQQHMSPTDKLKDESLQETPQQTNSISAEGESMTIAARNDQAILQPSQTHSEVRNEIESLIGP</sequence>
<proteinExistence type="inferred from homology"/>
<comment type="function">
    <text evidence="1">Involved in cytoplasm to vacuole transport (Cvt), pexophagy, mitophagy and nucleophagy. Recruits mitochondria for their selective degradation via autophagy (mitophagy) during starvation. Works as scaffold proteins that recruit ATG proteins to the pre-autophagosome (PAS), the site of vesicle/autophagosome formation. Required for the Cvt vesicles completion (By similarity).</text>
</comment>
<comment type="subunit">
    <text evidence="1">Homodimer.</text>
</comment>
<comment type="subcellular location">
    <subcellularLocation>
        <location evidence="1">Preautophagosomal structure membrane</location>
        <topology evidence="1">Peripheral membrane protein</topology>
    </subcellularLocation>
    <subcellularLocation>
        <location evidence="1">Vacuole membrane</location>
        <topology evidence="1">Peripheral membrane protein</topology>
    </subcellularLocation>
    <text evidence="1">During pexophagy, accumulates in the vacuolar membrane region, where the peroxisomes contact the vacuole.</text>
</comment>
<comment type="similarity">
    <text evidence="4">Belongs to the ATG11 family.</text>
</comment>